<sequence>MDVGFLSSDLFTFGLIPVLIFLARICDVSIGTIRYIMISRGFKFIAPVFGFFEVTIWLLAIGQVMANITNPICYIAYGAGFAAGTYIGMELEERMKLGMAIIRLITPLPTEDFIARLRQYGYGVTNITAQGANGEVTIIFMVVKRAKIPHLAILIRDFNPHAFYTIEDVRSASEGIYPIEDKNNPFSIFKRPFLFIGKRK</sequence>
<gene>
    <name type="ordered locus">Mhun_0543</name>
</gene>
<comment type="subcellular location">
    <subcellularLocation>
        <location evidence="1">Cell membrane</location>
        <topology evidence="1">Multi-pass membrane protein</topology>
    </subcellularLocation>
</comment>
<comment type="similarity">
    <text evidence="1">Belongs to the UPF0316 family.</text>
</comment>
<feature type="chain" id="PRO_0000250353" description="UPF0316 protein Mhun_0543">
    <location>
        <begin position="1"/>
        <end position="200"/>
    </location>
</feature>
<feature type="transmembrane region" description="Helical" evidence="1">
    <location>
        <begin position="3"/>
        <end position="23"/>
    </location>
</feature>
<feature type="transmembrane region" description="Helical" evidence="1">
    <location>
        <begin position="44"/>
        <end position="64"/>
    </location>
</feature>
<feature type="transmembrane region" description="Helical" evidence="1">
    <location>
        <begin position="71"/>
        <end position="91"/>
    </location>
</feature>
<organism>
    <name type="scientific">Methanospirillum hungatei JF-1 (strain ATCC 27890 / DSM 864 / NBRC 100397 / JF-1)</name>
    <dbReference type="NCBI Taxonomy" id="323259"/>
    <lineage>
        <taxon>Archaea</taxon>
        <taxon>Methanobacteriati</taxon>
        <taxon>Methanobacteriota</taxon>
        <taxon>Stenosarchaea group</taxon>
        <taxon>Methanomicrobia</taxon>
        <taxon>Methanomicrobiales</taxon>
        <taxon>Methanospirillaceae</taxon>
        <taxon>Methanospirillum</taxon>
    </lineage>
</organism>
<reference key="1">
    <citation type="journal article" date="2016" name="Stand. Genomic Sci.">
        <title>Complete genome sequence of Methanospirillum hungatei type strain JF1.</title>
        <authorList>
            <person name="Gunsalus R.P."/>
            <person name="Cook L.E."/>
            <person name="Crable B."/>
            <person name="Rohlin L."/>
            <person name="McDonald E."/>
            <person name="Mouttaki H."/>
            <person name="Sieber J.R."/>
            <person name="Poweleit N."/>
            <person name="Zhou H."/>
            <person name="Lapidus A.L."/>
            <person name="Daligault H.E."/>
            <person name="Land M."/>
            <person name="Gilna P."/>
            <person name="Ivanova N."/>
            <person name="Kyrpides N."/>
            <person name="Culley D.E."/>
            <person name="McInerney M.J."/>
        </authorList>
    </citation>
    <scope>NUCLEOTIDE SEQUENCE [LARGE SCALE GENOMIC DNA]</scope>
    <source>
        <strain>ATCC 27890 / DSM 864 / NBRC 100397 / JF-1</strain>
    </source>
</reference>
<protein>
    <recommendedName>
        <fullName evidence="1">UPF0316 protein Mhun_0543</fullName>
    </recommendedName>
</protein>
<name>Y543_METHJ</name>
<accession>Q2FLQ6</accession>
<evidence type="ECO:0000255" key="1">
    <source>
        <dbReference type="HAMAP-Rule" id="MF_01515"/>
    </source>
</evidence>
<dbReference type="EMBL" id="CP000254">
    <property type="protein sequence ID" value="ABD40303.1"/>
    <property type="molecule type" value="Genomic_DNA"/>
</dbReference>
<dbReference type="RefSeq" id="WP_011447590.1">
    <property type="nucleotide sequence ID" value="NC_007796.1"/>
</dbReference>
<dbReference type="SMR" id="Q2FLQ6"/>
<dbReference type="STRING" id="323259.Mhun_0543"/>
<dbReference type="EnsemblBacteria" id="ABD40303">
    <property type="protein sequence ID" value="ABD40303"/>
    <property type="gene ID" value="Mhun_0543"/>
</dbReference>
<dbReference type="GeneID" id="3924949"/>
<dbReference type="KEGG" id="mhu:Mhun_0543"/>
<dbReference type="eggNOG" id="arCOG06902">
    <property type="taxonomic scope" value="Archaea"/>
</dbReference>
<dbReference type="HOGENOM" id="CLU_106166_0_0_2"/>
<dbReference type="InParanoid" id="Q2FLQ6"/>
<dbReference type="OrthoDB" id="146491at2157"/>
<dbReference type="Proteomes" id="UP000001941">
    <property type="component" value="Chromosome"/>
</dbReference>
<dbReference type="GO" id="GO:0005886">
    <property type="term" value="C:plasma membrane"/>
    <property type="evidence" value="ECO:0007669"/>
    <property type="project" value="UniProtKB-SubCell"/>
</dbReference>
<dbReference type="CDD" id="cd16381">
    <property type="entry name" value="YitT_C_like_1"/>
    <property type="match status" value="1"/>
</dbReference>
<dbReference type="Gene3D" id="3.30.70.120">
    <property type="match status" value="1"/>
</dbReference>
<dbReference type="HAMAP" id="MF_01515">
    <property type="entry name" value="UPF0316"/>
    <property type="match status" value="1"/>
</dbReference>
<dbReference type="InterPro" id="IPR019264">
    <property type="entry name" value="DUF2179"/>
</dbReference>
<dbReference type="InterPro" id="IPR044035">
    <property type="entry name" value="DUF5698"/>
</dbReference>
<dbReference type="InterPro" id="IPR015867">
    <property type="entry name" value="N-reg_PII/ATP_PRibTrfase_C"/>
</dbReference>
<dbReference type="InterPro" id="IPR022930">
    <property type="entry name" value="UPF0316"/>
</dbReference>
<dbReference type="NCBIfam" id="NF003191">
    <property type="entry name" value="PRK04164.1-2"/>
    <property type="match status" value="1"/>
</dbReference>
<dbReference type="PANTHER" id="PTHR40060">
    <property type="entry name" value="UPF0316 PROTEIN YEBE"/>
    <property type="match status" value="1"/>
</dbReference>
<dbReference type="PANTHER" id="PTHR40060:SF1">
    <property type="entry name" value="UPF0316 PROTEIN YEBE"/>
    <property type="match status" value="1"/>
</dbReference>
<dbReference type="Pfam" id="PF10035">
    <property type="entry name" value="DUF2179"/>
    <property type="match status" value="1"/>
</dbReference>
<dbReference type="Pfam" id="PF18955">
    <property type="entry name" value="DUF5698"/>
    <property type="match status" value="1"/>
</dbReference>
<proteinExistence type="inferred from homology"/>
<keyword id="KW-1003">Cell membrane</keyword>
<keyword id="KW-0472">Membrane</keyword>
<keyword id="KW-1185">Reference proteome</keyword>
<keyword id="KW-0812">Transmembrane</keyword>
<keyword id="KW-1133">Transmembrane helix</keyword>